<name>CC187_MOUSE</name>
<gene>
    <name evidence="4" type="primary">Ccdc187</name>
</gene>
<keyword id="KW-0175">Coiled coil</keyword>
<keyword id="KW-1185">Reference proteome</keyword>
<dbReference type="EMBL" id="AL773595">
    <property type="status" value="NOT_ANNOTATED_CDS"/>
    <property type="molecule type" value="Genomic_DNA"/>
</dbReference>
<dbReference type="EMBL" id="AK077032">
    <property type="protein sequence ID" value="BAC36576.1"/>
    <property type="molecule type" value="mRNA"/>
</dbReference>
<dbReference type="CCDS" id="CCDS50539.1"/>
<dbReference type="RefSeq" id="NP_808509.1">
    <property type="nucleotide sequence ID" value="NM_177841.4"/>
</dbReference>
<dbReference type="SMR" id="Q8C5V8"/>
<dbReference type="FunCoup" id="Q8C5V8">
    <property type="interactions" value="3"/>
</dbReference>
<dbReference type="STRING" id="10090.ENSMUSP00000054283"/>
<dbReference type="GlyGen" id="Q8C5V8">
    <property type="glycosylation" value="1 site"/>
</dbReference>
<dbReference type="iPTMnet" id="Q8C5V8"/>
<dbReference type="PhosphoSitePlus" id="Q8C5V8"/>
<dbReference type="PaxDb" id="10090-ENSMUSP00000054283"/>
<dbReference type="ProteomicsDB" id="265587"/>
<dbReference type="Antibodypedia" id="58147">
    <property type="antibodies" value="15 antibodies from 8 providers"/>
</dbReference>
<dbReference type="Ensembl" id="ENSMUST00000057224.4">
    <property type="protein sequence ID" value="ENSMUSP00000054283.4"/>
    <property type="gene ID" value="ENSMUSG00000048038.9"/>
</dbReference>
<dbReference type="GeneID" id="329366"/>
<dbReference type="KEGG" id="mmu:329366"/>
<dbReference type="UCSC" id="uc008ium.1">
    <property type="organism name" value="mouse"/>
</dbReference>
<dbReference type="AGR" id="MGI:3045295"/>
<dbReference type="CTD" id="399693"/>
<dbReference type="MGI" id="MGI:3045295">
    <property type="gene designation" value="Ccdc187"/>
</dbReference>
<dbReference type="VEuPathDB" id="HostDB:ENSMUSG00000048038"/>
<dbReference type="eggNOG" id="KOG4568">
    <property type="taxonomic scope" value="Eukaryota"/>
</dbReference>
<dbReference type="GeneTree" id="ENSGT00530000065015"/>
<dbReference type="HOGENOM" id="CLU_012638_0_0_1"/>
<dbReference type="InParanoid" id="Q8C5V8"/>
<dbReference type="OrthoDB" id="87950at9989"/>
<dbReference type="PhylomeDB" id="Q8C5V8"/>
<dbReference type="TreeFam" id="TF338851"/>
<dbReference type="BioGRID-ORCS" id="329366">
    <property type="hits" value="4 hits in 45 CRISPR screens"/>
</dbReference>
<dbReference type="ChiTaRS" id="Ccdc187">
    <property type="organism name" value="mouse"/>
</dbReference>
<dbReference type="PRO" id="PR:Q8C5V8"/>
<dbReference type="Proteomes" id="UP000000589">
    <property type="component" value="Chromosome 2"/>
</dbReference>
<dbReference type="RNAct" id="Q8C5V8">
    <property type="molecule type" value="protein"/>
</dbReference>
<dbReference type="Bgee" id="ENSMUSG00000048038">
    <property type="expression patterns" value="Expressed in seminiferous tubule of testis and 49 other cell types or tissues"/>
</dbReference>
<dbReference type="ExpressionAtlas" id="Q8C5V8">
    <property type="expression patterns" value="baseline and differential"/>
</dbReference>
<dbReference type="GO" id="GO:0005813">
    <property type="term" value="C:centrosome"/>
    <property type="evidence" value="ECO:0007669"/>
    <property type="project" value="InterPro"/>
</dbReference>
<dbReference type="GO" id="GO:0008017">
    <property type="term" value="F:microtubule binding"/>
    <property type="evidence" value="ECO:0007669"/>
    <property type="project" value="InterPro"/>
</dbReference>
<dbReference type="GO" id="GO:0034453">
    <property type="term" value="P:microtubule anchoring"/>
    <property type="evidence" value="ECO:0007669"/>
    <property type="project" value="InterPro"/>
</dbReference>
<dbReference type="InterPro" id="IPR028750">
    <property type="entry name" value="CEP350/CC187"/>
</dbReference>
<dbReference type="PANTHER" id="PTHR13958">
    <property type="entry name" value="CENTROSOME-ASSOCIATED PROTEIN 350"/>
    <property type="match status" value="1"/>
</dbReference>
<dbReference type="PANTHER" id="PTHR13958:SF5">
    <property type="entry name" value="COILED-COIL DOMAIN-CONTAINING PROTEIN 187"/>
    <property type="match status" value="1"/>
</dbReference>
<proteinExistence type="evidence at transcript level"/>
<accession>Q8C5V8</accession>
<evidence type="ECO:0000255" key="1"/>
<evidence type="ECO:0000256" key="2">
    <source>
        <dbReference type="SAM" id="MobiDB-lite"/>
    </source>
</evidence>
<evidence type="ECO:0000305" key="3"/>
<evidence type="ECO:0000312" key="4">
    <source>
        <dbReference type="MGI" id="MGI:3045295"/>
    </source>
</evidence>
<protein>
    <recommendedName>
        <fullName evidence="3">Coiled-coil domain-containing protein 187</fullName>
    </recommendedName>
</protein>
<sequence length="958" mass="104957">MTTPLMGVMPTSLRATLQNCSRGNQQEGLFSPKAMGRMAGQKDSTKPRDEVFHPHAAKDSLLATTLRWPVLSQQLSPPQTVPYVAWSGNIKDPSPYMKGCSLPMWSPCLDTKDVDSSVSSGRMSGSSGGHESCTLSHGPWKERPPLILGPQRQPRKSDPRLEQLRDKIRAQAQWQASCASLGTSAPSSASCLYKTSTMLWRKTPKVTNALPVPAFPGSGVLRTAEHRGKDRASLSLRRELSKVPQHHTSVPRTNFKKVKNASCKREISKSSILRRTAKGRGSDRKAAAVKASPAHTWLCKPMSAHSDQQVSKHTPSLAFQDQSATIHGAMETLQDLRQQIQAGLELTRSPRVDRKLSLSKPKPQNLVGKRDRGLQSTQDMQGSSKTAWTVTEGKNSSLHRAGNLHSQQHRKKALAEHESCPRRTWTGQGQDSSFPRPGSTPEKPRFFSQRPWSALARQTYPQRTWDAQGQDISVQKSGSSLKKPSPFSQRPWSALAGRAYSACEDREVFEPSPWNSLSRPHSALQDPWSNSFVQRSSPSSKGKSAVPPPSKVKPAWPEPSQDLLQSKPAKEQDTPCPRPRGSLGQQHSSESLRDFMRQKAQARRQQALEQKALAAHTLELRNQRLQEVYRKQREAVLGKDIPVVSQRRPGIVTFVPMQSGGMEAPGSLGSPREQTWSKVTSGMVLGDQEAPDSFCLCLNKPWNRIETQDTGRPLEGYKQARLQALETMAEALRQRVDILTTKLDKPTSPDTSGDLASDVLPLCPSTAPATPTLVPPSYLRTLMSKGGRESPRDLVDSQAEPLLLSTCFQDGEMLPWSPSWELPNPNLGTHIESQPQGPVSSTPASVSQVIPHTQSCPAGSSSHGALSKEAIQGLEKKLQREMATLQALGACMKSSLGMPDAPDPTRGSLWQEEMPEVKKEGLVTPWTTRSCGKGEPADRPWAGWSGGQGGLPWASSTA</sequence>
<feature type="chain" id="PRO_0000435397" description="Coiled-coil domain-containing protein 187">
    <location>
        <begin position="1"/>
        <end position="958"/>
    </location>
</feature>
<feature type="region of interest" description="Disordered" evidence="2">
    <location>
        <begin position="116"/>
        <end position="160"/>
    </location>
</feature>
<feature type="region of interest" description="Disordered" evidence="2">
    <location>
        <begin position="345"/>
        <end position="447"/>
    </location>
</feature>
<feature type="region of interest" description="Disordered" evidence="2">
    <location>
        <begin position="470"/>
        <end position="492"/>
    </location>
</feature>
<feature type="region of interest" description="Disordered" evidence="2">
    <location>
        <begin position="510"/>
        <end position="602"/>
    </location>
</feature>
<feature type="region of interest" description="Disordered" evidence="2">
    <location>
        <begin position="916"/>
        <end position="958"/>
    </location>
</feature>
<feature type="coiled-coil region" evidence="1">
    <location>
        <begin position="718"/>
        <end position="743"/>
    </location>
</feature>
<feature type="compositionally biased region" description="Low complexity" evidence="2">
    <location>
        <begin position="116"/>
        <end position="132"/>
    </location>
</feature>
<feature type="compositionally biased region" description="Polar residues" evidence="2">
    <location>
        <begin position="374"/>
        <end position="398"/>
    </location>
</feature>
<feature type="compositionally biased region" description="Polar residues" evidence="2">
    <location>
        <begin position="470"/>
        <end position="491"/>
    </location>
</feature>
<feature type="compositionally biased region" description="Low complexity" evidence="2">
    <location>
        <begin position="536"/>
        <end position="545"/>
    </location>
</feature>
<organism>
    <name type="scientific">Mus musculus</name>
    <name type="common">Mouse</name>
    <dbReference type="NCBI Taxonomy" id="10090"/>
    <lineage>
        <taxon>Eukaryota</taxon>
        <taxon>Metazoa</taxon>
        <taxon>Chordata</taxon>
        <taxon>Craniata</taxon>
        <taxon>Vertebrata</taxon>
        <taxon>Euteleostomi</taxon>
        <taxon>Mammalia</taxon>
        <taxon>Eutheria</taxon>
        <taxon>Euarchontoglires</taxon>
        <taxon>Glires</taxon>
        <taxon>Rodentia</taxon>
        <taxon>Myomorpha</taxon>
        <taxon>Muroidea</taxon>
        <taxon>Muridae</taxon>
        <taxon>Murinae</taxon>
        <taxon>Mus</taxon>
        <taxon>Mus</taxon>
    </lineage>
</organism>
<reference key="1">
    <citation type="journal article" date="2005" name="Science">
        <title>The transcriptional landscape of the mammalian genome.</title>
        <authorList>
            <person name="Carninci P."/>
            <person name="Kasukawa T."/>
            <person name="Katayama S."/>
            <person name="Gough J."/>
            <person name="Frith M.C."/>
            <person name="Maeda N."/>
            <person name="Oyama R."/>
            <person name="Ravasi T."/>
            <person name="Lenhard B."/>
            <person name="Wells C."/>
            <person name="Kodzius R."/>
            <person name="Shimokawa K."/>
            <person name="Bajic V.B."/>
            <person name="Brenner S.E."/>
            <person name="Batalov S."/>
            <person name="Forrest A.R."/>
            <person name="Zavolan M."/>
            <person name="Davis M.J."/>
            <person name="Wilming L.G."/>
            <person name="Aidinis V."/>
            <person name="Allen J.E."/>
            <person name="Ambesi-Impiombato A."/>
            <person name="Apweiler R."/>
            <person name="Aturaliya R.N."/>
            <person name="Bailey T.L."/>
            <person name="Bansal M."/>
            <person name="Baxter L."/>
            <person name="Beisel K.W."/>
            <person name="Bersano T."/>
            <person name="Bono H."/>
            <person name="Chalk A.M."/>
            <person name="Chiu K.P."/>
            <person name="Choudhary V."/>
            <person name="Christoffels A."/>
            <person name="Clutterbuck D.R."/>
            <person name="Crowe M.L."/>
            <person name="Dalla E."/>
            <person name="Dalrymple B.P."/>
            <person name="de Bono B."/>
            <person name="Della Gatta G."/>
            <person name="di Bernardo D."/>
            <person name="Down T."/>
            <person name="Engstrom P."/>
            <person name="Fagiolini M."/>
            <person name="Faulkner G."/>
            <person name="Fletcher C.F."/>
            <person name="Fukushima T."/>
            <person name="Furuno M."/>
            <person name="Futaki S."/>
            <person name="Gariboldi M."/>
            <person name="Georgii-Hemming P."/>
            <person name="Gingeras T.R."/>
            <person name="Gojobori T."/>
            <person name="Green R.E."/>
            <person name="Gustincich S."/>
            <person name="Harbers M."/>
            <person name="Hayashi Y."/>
            <person name="Hensch T.K."/>
            <person name="Hirokawa N."/>
            <person name="Hill D."/>
            <person name="Huminiecki L."/>
            <person name="Iacono M."/>
            <person name="Ikeo K."/>
            <person name="Iwama A."/>
            <person name="Ishikawa T."/>
            <person name="Jakt M."/>
            <person name="Kanapin A."/>
            <person name="Katoh M."/>
            <person name="Kawasawa Y."/>
            <person name="Kelso J."/>
            <person name="Kitamura H."/>
            <person name="Kitano H."/>
            <person name="Kollias G."/>
            <person name="Krishnan S.P."/>
            <person name="Kruger A."/>
            <person name="Kummerfeld S.K."/>
            <person name="Kurochkin I.V."/>
            <person name="Lareau L.F."/>
            <person name="Lazarevic D."/>
            <person name="Lipovich L."/>
            <person name="Liu J."/>
            <person name="Liuni S."/>
            <person name="McWilliam S."/>
            <person name="Madan Babu M."/>
            <person name="Madera M."/>
            <person name="Marchionni L."/>
            <person name="Matsuda H."/>
            <person name="Matsuzawa S."/>
            <person name="Miki H."/>
            <person name="Mignone F."/>
            <person name="Miyake S."/>
            <person name="Morris K."/>
            <person name="Mottagui-Tabar S."/>
            <person name="Mulder N."/>
            <person name="Nakano N."/>
            <person name="Nakauchi H."/>
            <person name="Ng P."/>
            <person name="Nilsson R."/>
            <person name="Nishiguchi S."/>
            <person name="Nishikawa S."/>
            <person name="Nori F."/>
            <person name="Ohara O."/>
            <person name="Okazaki Y."/>
            <person name="Orlando V."/>
            <person name="Pang K.C."/>
            <person name="Pavan W.J."/>
            <person name="Pavesi G."/>
            <person name="Pesole G."/>
            <person name="Petrovsky N."/>
            <person name="Piazza S."/>
            <person name="Reed J."/>
            <person name="Reid J.F."/>
            <person name="Ring B.Z."/>
            <person name="Ringwald M."/>
            <person name="Rost B."/>
            <person name="Ruan Y."/>
            <person name="Salzberg S.L."/>
            <person name="Sandelin A."/>
            <person name="Schneider C."/>
            <person name="Schoenbach C."/>
            <person name="Sekiguchi K."/>
            <person name="Semple C.A."/>
            <person name="Seno S."/>
            <person name="Sessa L."/>
            <person name="Sheng Y."/>
            <person name="Shibata Y."/>
            <person name="Shimada H."/>
            <person name="Shimada K."/>
            <person name="Silva D."/>
            <person name="Sinclair B."/>
            <person name="Sperling S."/>
            <person name="Stupka E."/>
            <person name="Sugiura K."/>
            <person name="Sultana R."/>
            <person name="Takenaka Y."/>
            <person name="Taki K."/>
            <person name="Tammoja K."/>
            <person name="Tan S.L."/>
            <person name="Tang S."/>
            <person name="Taylor M.S."/>
            <person name="Tegner J."/>
            <person name="Teichmann S.A."/>
            <person name="Ueda H.R."/>
            <person name="van Nimwegen E."/>
            <person name="Verardo R."/>
            <person name="Wei C.L."/>
            <person name="Yagi K."/>
            <person name="Yamanishi H."/>
            <person name="Zabarovsky E."/>
            <person name="Zhu S."/>
            <person name="Zimmer A."/>
            <person name="Hide W."/>
            <person name="Bult C."/>
            <person name="Grimmond S.M."/>
            <person name="Teasdale R.D."/>
            <person name="Liu E.T."/>
            <person name="Brusic V."/>
            <person name="Quackenbush J."/>
            <person name="Wahlestedt C."/>
            <person name="Mattick J.S."/>
            <person name="Hume D.A."/>
            <person name="Kai C."/>
            <person name="Sasaki D."/>
            <person name="Tomaru Y."/>
            <person name="Fukuda S."/>
            <person name="Kanamori-Katayama M."/>
            <person name="Suzuki M."/>
            <person name="Aoki J."/>
            <person name="Arakawa T."/>
            <person name="Iida J."/>
            <person name="Imamura K."/>
            <person name="Itoh M."/>
            <person name="Kato T."/>
            <person name="Kawaji H."/>
            <person name="Kawagashira N."/>
            <person name="Kawashima T."/>
            <person name="Kojima M."/>
            <person name="Kondo S."/>
            <person name="Konno H."/>
            <person name="Nakano K."/>
            <person name="Ninomiya N."/>
            <person name="Nishio T."/>
            <person name="Okada M."/>
            <person name="Plessy C."/>
            <person name="Shibata K."/>
            <person name="Shiraki T."/>
            <person name="Suzuki S."/>
            <person name="Tagami M."/>
            <person name="Waki K."/>
            <person name="Watahiki A."/>
            <person name="Okamura-Oho Y."/>
            <person name="Suzuki H."/>
            <person name="Kawai J."/>
            <person name="Hayashizaki Y."/>
        </authorList>
    </citation>
    <scope>NUCLEOTIDE SEQUENCE [LARGE SCALE MRNA]</scope>
    <source>
        <tissue>Testis</tissue>
    </source>
</reference>